<organism>
    <name type="scientific">Brucella abortus biovar 1 (strain 9-941)</name>
    <dbReference type="NCBI Taxonomy" id="262698"/>
    <lineage>
        <taxon>Bacteria</taxon>
        <taxon>Pseudomonadati</taxon>
        <taxon>Pseudomonadota</taxon>
        <taxon>Alphaproteobacteria</taxon>
        <taxon>Hyphomicrobiales</taxon>
        <taxon>Brucellaceae</taxon>
        <taxon>Brucella/Ochrobactrum group</taxon>
        <taxon>Brucella</taxon>
    </lineage>
</organism>
<sequence>MLQTMKTLTLIPARLGSTRLPNKPLADICGKPMIVHVADRAAAAKLGRTVIATDSEEIFKVVAAHGHEAIMTRGDHESGSDRIYEALAKLDPSGEIDAVVNVQGDLPTIDPDTIRRALLPLEDGPADIATLGVEITVEEEKTNPNVVKIVGSPLAGNRRLRALYFTRATAPYGEGPLYHHIGLYAYRRSALERFVKLGPSPLEKREKLEQLRALEAGMRIDVEIVKTVPLGVDTQADLDRARTFCSQAGTI</sequence>
<protein>
    <recommendedName>
        <fullName evidence="1">3-deoxy-manno-octulosonate cytidylyltransferase</fullName>
        <ecNumber evidence="1">2.7.7.38</ecNumber>
    </recommendedName>
    <alternativeName>
        <fullName evidence="1">CMP-2-keto-3-deoxyoctulosonic acid synthase</fullName>
        <shortName evidence="1">CKS</shortName>
        <shortName evidence="1">CMP-KDO synthase</shortName>
    </alternativeName>
</protein>
<keyword id="KW-0963">Cytoplasm</keyword>
<keyword id="KW-0448">Lipopolysaccharide biosynthesis</keyword>
<keyword id="KW-0548">Nucleotidyltransferase</keyword>
<keyword id="KW-0808">Transferase</keyword>
<gene>
    <name evidence="1" type="primary">kdsB</name>
    <name type="ordered locus">BruAb1_0038</name>
</gene>
<evidence type="ECO:0000255" key="1">
    <source>
        <dbReference type="HAMAP-Rule" id="MF_00057"/>
    </source>
</evidence>
<comment type="function">
    <text evidence="1">Activates KDO (a required 8-carbon sugar) for incorporation into bacterial lipopolysaccharide in Gram-negative bacteria.</text>
</comment>
<comment type="catalytic activity">
    <reaction evidence="1">
        <text>3-deoxy-alpha-D-manno-oct-2-ulosonate + CTP = CMP-3-deoxy-beta-D-manno-octulosonate + diphosphate</text>
        <dbReference type="Rhea" id="RHEA:23448"/>
        <dbReference type="ChEBI" id="CHEBI:33019"/>
        <dbReference type="ChEBI" id="CHEBI:37563"/>
        <dbReference type="ChEBI" id="CHEBI:85986"/>
        <dbReference type="ChEBI" id="CHEBI:85987"/>
        <dbReference type="EC" id="2.7.7.38"/>
    </reaction>
</comment>
<comment type="pathway">
    <text evidence="1">Nucleotide-sugar biosynthesis; CMP-3-deoxy-D-manno-octulosonate biosynthesis; CMP-3-deoxy-D-manno-octulosonate from 3-deoxy-D-manno-octulosonate and CTP: step 1/1.</text>
</comment>
<comment type="pathway">
    <text evidence="1">Bacterial outer membrane biogenesis; lipopolysaccharide biosynthesis.</text>
</comment>
<comment type="subcellular location">
    <subcellularLocation>
        <location evidence="1">Cytoplasm</location>
    </subcellularLocation>
</comment>
<comment type="similarity">
    <text evidence="1">Belongs to the KdsB family.</text>
</comment>
<name>KDSB_BRUAB</name>
<proteinExistence type="inferred from homology"/>
<reference key="1">
    <citation type="journal article" date="2005" name="J. Bacteriol.">
        <title>Completion of the genome sequence of Brucella abortus and comparison to the highly similar genomes of Brucella melitensis and Brucella suis.</title>
        <authorList>
            <person name="Halling S.M."/>
            <person name="Peterson-Burch B.D."/>
            <person name="Bricker B.J."/>
            <person name="Zuerner R.L."/>
            <person name="Qing Z."/>
            <person name="Li L.-L."/>
            <person name="Kapur V."/>
            <person name="Alt D.P."/>
            <person name="Olsen S.C."/>
        </authorList>
    </citation>
    <scope>NUCLEOTIDE SEQUENCE [LARGE SCALE GENOMIC DNA]</scope>
    <source>
        <strain>9-941</strain>
    </source>
</reference>
<feature type="chain" id="PRO_0000370011" description="3-deoxy-manno-octulosonate cytidylyltransferase">
    <location>
        <begin position="1"/>
        <end position="251"/>
    </location>
</feature>
<dbReference type="EC" id="2.7.7.38" evidence="1"/>
<dbReference type="EMBL" id="AE017223">
    <property type="protein sequence ID" value="AAX73458.1"/>
    <property type="molecule type" value="Genomic_DNA"/>
</dbReference>
<dbReference type="RefSeq" id="WP_002971781.1">
    <property type="nucleotide sequence ID" value="NC_006932.1"/>
</dbReference>
<dbReference type="SMR" id="Q57FX6"/>
<dbReference type="EnsemblBacteria" id="AAX73458">
    <property type="protein sequence ID" value="AAX73458"/>
    <property type="gene ID" value="BruAb1_0038"/>
</dbReference>
<dbReference type="KEGG" id="bmb:BruAb1_0038"/>
<dbReference type="HOGENOM" id="CLU_065038_0_1_5"/>
<dbReference type="UniPathway" id="UPA00030"/>
<dbReference type="UniPathway" id="UPA00358">
    <property type="reaction ID" value="UER00476"/>
</dbReference>
<dbReference type="Proteomes" id="UP000000540">
    <property type="component" value="Chromosome I"/>
</dbReference>
<dbReference type="GO" id="GO:0005829">
    <property type="term" value="C:cytosol"/>
    <property type="evidence" value="ECO:0007669"/>
    <property type="project" value="TreeGrafter"/>
</dbReference>
<dbReference type="GO" id="GO:0008690">
    <property type="term" value="F:3-deoxy-manno-octulosonate cytidylyltransferase activity"/>
    <property type="evidence" value="ECO:0007669"/>
    <property type="project" value="UniProtKB-UniRule"/>
</dbReference>
<dbReference type="GO" id="GO:0033468">
    <property type="term" value="P:CMP-keto-3-deoxy-D-manno-octulosonic acid biosynthetic process"/>
    <property type="evidence" value="ECO:0007669"/>
    <property type="project" value="UniProtKB-UniRule"/>
</dbReference>
<dbReference type="GO" id="GO:0009103">
    <property type="term" value="P:lipopolysaccharide biosynthetic process"/>
    <property type="evidence" value="ECO:0007669"/>
    <property type="project" value="UniProtKB-UniRule"/>
</dbReference>
<dbReference type="CDD" id="cd02517">
    <property type="entry name" value="CMP-KDO-Synthetase"/>
    <property type="match status" value="1"/>
</dbReference>
<dbReference type="Gene3D" id="3.90.550.10">
    <property type="entry name" value="Spore Coat Polysaccharide Biosynthesis Protein SpsA, Chain A"/>
    <property type="match status" value="1"/>
</dbReference>
<dbReference type="HAMAP" id="MF_00057">
    <property type="entry name" value="KdsB"/>
    <property type="match status" value="1"/>
</dbReference>
<dbReference type="InterPro" id="IPR003329">
    <property type="entry name" value="Cytidylyl_trans"/>
</dbReference>
<dbReference type="InterPro" id="IPR004528">
    <property type="entry name" value="KdsB"/>
</dbReference>
<dbReference type="InterPro" id="IPR029044">
    <property type="entry name" value="Nucleotide-diphossugar_trans"/>
</dbReference>
<dbReference type="NCBIfam" id="TIGR00466">
    <property type="entry name" value="kdsB"/>
    <property type="match status" value="1"/>
</dbReference>
<dbReference type="NCBIfam" id="NF003948">
    <property type="entry name" value="PRK05450.1-1"/>
    <property type="match status" value="1"/>
</dbReference>
<dbReference type="NCBIfam" id="NF003952">
    <property type="entry name" value="PRK05450.1-5"/>
    <property type="match status" value="1"/>
</dbReference>
<dbReference type="PANTHER" id="PTHR42866">
    <property type="entry name" value="3-DEOXY-MANNO-OCTULOSONATE CYTIDYLYLTRANSFERASE"/>
    <property type="match status" value="1"/>
</dbReference>
<dbReference type="PANTHER" id="PTHR42866:SF2">
    <property type="entry name" value="3-DEOXY-MANNO-OCTULOSONATE CYTIDYLYLTRANSFERASE, MITOCHONDRIAL"/>
    <property type="match status" value="1"/>
</dbReference>
<dbReference type="Pfam" id="PF02348">
    <property type="entry name" value="CTP_transf_3"/>
    <property type="match status" value="1"/>
</dbReference>
<dbReference type="SUPFAM" id="SSF53448">
    <property type="entry name" value="Nucleotide-diphospho-sugar transferases"/>
    <property type="match status" value="1"/>
</dbReference>
<accession>Q57FX6</accession>